<organism>
    <name type="scientific">Paenarthrobacter aurescens (strain TC1)</name>
    <dbReference type="NCBI Taxonomy" id="290340"/>
    <lineage>
        <taxon>Bacteria</taxon>
        <taxon>Bacillati</taxon>
        <taxon>Actinomycetota</taxon>
        <taxon>Actinomycetes</taxon>
        <taxon>Micrococcales</taxon>
        <taxon>Micrococcaceae</taxon>
        <taxon>Paenarthrobacter</taxon>
    </lineage>
</organism>
<sequence length="121" mass="13531">MEAKAIARHIRVTPMKARRVVNLVRGKQANEALAILKFAPQAASEPVFKVLQSAMANARVLADRDGVAFDDSDLFITEAFVDEGPTMKRFQPRAQGRAYRIRKRTSHITLVVATPEKEEAR</sequence>
<comment type="function">
    <text evidence="1">This protein binds specifically to 23S rRNA; its binding is stimulated by other ribosomal proteins, e.g. L4, L17, and L20. It is important during the early stages of 50S assembly. It makes multiple contacts with different domains of the 23S rRNA in the assembled 50S subunit and ribosome (By similarity).</text>
</comment>
<comment type="function">
    <text evidence="1">The globular domain of the protein is located near the polypeptide exit tunnel on the outside of the subunit, while an extended beta-hairpin is found that lines the wall of the exit tunnel in the center of the 70S ribosome.</text>
</comment>
<comment type="subunit">
    <text evidence="1">Part of the 50S ribosomal subunit.</text>
</comment>
<comment type="similarity">
    <text evidence="1">Belongs to the universal ribosomal protein uL22 family.</text>
</comment>
<evidence type="ECO:0000255" key="1">
    <source>
        <dbReference type="HAMAP-Rule" id="MF_01331"/>
    </source>
</evidence>
<evidence type="ECO:0000305" key="2"/>
<feature type="chain" id="PRO_1000067605" description="Large ribosomal subunit protein uL22">
    <location>
        <begin position="1"/>
        <end position="121"/>
    </location>
</feature>
<protein>
    <recommendedName>
        <fullName evidence="1">Large ribosomal subunit protein uL22</fullName>
    </recommendedName>
    <alternativeName>
        <fullName evidence="2">50S ribosomal protein L22</fullName>
    </alternativeName>
</protein>
<reference key="1">
    <citation type="journal article" date="2006" name="PLoS Genet.">
        <title>Secrets of soil survival revealed by the genome sequence of Arthrobacter aurescens TC1.</title>
        <authorList>
            <person name="Mongodin E.F."/>
            <person name="Shapir N."/>
            <person name="Daugherty S.C."/>
            <person name="DeBoy R.T."/>
            <person name="Emerson J.B."/>
            <person name="Shvartzbeyn A."/>
            <person name="Radune D."/>
            <person name="Vamathevan J."/>
            <person name="Riggs F."/>
            <person name="Grinberg V."/>
            <person name="Khouri H.M."/>
            <person name="Wackett L.P."/>
            <person name="Nelson K.E."/>
            <person name="Sadowsky M.J."/>
        </authorList>
    </citation>
    <scope>NUCLEOTIDE SEQUENCE [LARGE SCALE GENOMIC DNA]</scope>
    <source>
        <strain>TC1</strain>
    </source>
</reference>
<accession>A1R8U0</accession>
<gene>
    <name evidence="1" type="primary">rplV</name>
    <name type="ordered locus">AAur_2943</name>
</gene>
<keyword id="KW-0687">Ribonucleoprotein</keyword>
<keyword id="KW-0689">Ribosomal protein</keyword>
<keyword id="KW-0694">RNA-binding</keyword>
<keyword id="KW-0699">rRNA-binding</keyword>
<proteinExistence type="inferred from homology"/>
<name>RL22_PAEAT</name>
<dbReference type="EMBL" id="CP000474">
    <property type="protein sequence ID" value="ABM10029.1"/>
    <property type="molecule type" value="Genomic_DNA"/>
</dbReference>
<dbReference type="RefSeq" id="WP_011775590.1">
    <property type="nucleotide sequence ID" value="NC_008711.1"/>
</dbReference>
<dbReference type="SMR" id="A1R8U0"/>
<dbReference type="STRING" id="290340.AAur_2943"/>
<dbReference type="GeneID" id="97301787"/>
<dbReference type="KEGG" id="aau:AAur_2943"/>
<dbReference type="eggNOG" id="COG0091">
    <property type="taxonomic scope" value="Bacteria"/>
</dbReference>
<dbReference type="HOGENOM" id="CLU_083987_3_3_11"/>
<dbReference type="OrthoDB" id="9805969at2"/>
<dbReference type="Proteomes" id="UP000000637">
    <property type="component" value="Chromosome"/>
</dbReference>
<dbReference type="GO" id="GO:0022625">
    <property type="term" value="C:cytosolic large ribosomal subunit"/>
    <property type="evidence" value="ECO:0007669"/>
    <property type="project" value="TreeGrafter"/>
</dbReference>
<dbReference type="GO" id="GO:0019843">
    <property type="term" value="F:rRNA binding"/>
    <property type="evidence" value="ECO:0007669"/>
    <property type="project" value="UniProtKB-UniRule"/>
</dbReference>
<dbReference type="GO" id="GO:0003735">
    <property type="term" value="F:structural constituent of ribosome"/>
    <property type="evidence" value="ECO:0007669"/>
    <property type="project" value="InterPro"/>
</dbReference>
<dbReference type="GO" id="GO:0006412">
    <property type="term" value="P:translation"/>
    <property type="evidence" value="ECO:0007669"/>
    <property type="project" value="UniProtKB-UniRule"/>
</dbReference>
<dbReference type="CDD" id="cd00336">
    <property type="entry name" value="Ribosomal_L22"/>
    <property type="match status" value="1"/>
</dbReference>
<dbReference type="Gene3D" id="3.90.470.10">
    <property type="entry name" value="Ribosomal protein L22/L17"/>
    <property type="match status" value="1"/>
</dbReference>
<dbReference type="HAMAP" id="MF_01331_B">
    <property type="entry name" value="Ribosomal_uL22_B"/>
    <property type="match status" value="1"/>
</dbReference>
<dbReference type="InterPro" id="IPR001063">
    <property type="entry name" value="Ribosomal_uL22"/>
</dbReference>
<dbReference type="InterPro" id="IPR005727">
    <property type="entry name" value="Ribosomal_uL22_bac/chlpt-type"/>
</dbReference>
<dbReference type="InterPro" id="IPR047867">
    <property type="entry name" value="Ribosomal_uL22_bac/org-type"/>
</dbReference>
<dbReference type="InterPro" id="IPR018260">
    <property type="entry name" value="Ribosomal_uL22_CS"/>
</dbReference>
<dbReference type="InterPro" id="IPR036394">
    <property type="entry name" value="Ribosomal_uL22_sf"/>
</dbReference>
<dbReference type="NCBIfam" id="TIGR01044">
    <property type="entry name" value="rplV_bact"/>
    <property type="match status" value="1"/>
</dbReference>
<dbReference type="PANTHER" id="PTHR13501">
    <property type="entry name" value="CHLOROPLAST 50S RIBOSOMAL PROTEIN L22-RELATED"/>
    <property type="match status" value="1"/>
</dbReference>
<dbReference type="PANTHER" id="PTHR13501:SF8">
    <property type="entry name" value="LARGE RIBOSOMAL SUBUNIT PROTEIN UL22M"/>
    <property type="match status" value="1"/>
</dbReference>
<dbReference type="Pfam" id="PF00237">
    <property type="entry name" value="Ribosomal_L22"/>
    <property type="match status" value="1"/>
</dbReference>
<dbReference type="SUPFAM" id="SSF54843">
    <property type="entry name" value="Ribosomal protein L22"/>
    <property type="match status" value="1"/>
</dbReference>
<dbReference type="PROSITE" id="PS00464">
    <property type="entry name" value="RIBOSOMAL_L22"/>
    <property type="match status" value="1"/>
</dbReference>